<dbReference type="EMBL" id="D10827">
    <property type="protein sequence ID" value="BAA01609.1"/>
    <property type="molecule type" value="Genomic_DNA"/>
</dbReference>
<dbReference type="PIR" id="JC1315">
    <property type="entry name" value="YMSMCG"/>
</dbReference>
<dbReference type="PDB" id="1HZK">
    <property type="method" value="NMR"/>
    <property type="chains" value="A=34-143"/>
</dbReference>
<dbReference type="PDB" id="1HZL">
    <property type="method" value="NMR"/>
    <property type="chains" value="A=34-143"/>
</dbReference>
<dbReference type="PDB" id="1J48">
    <property type="method" value="X-ray"/>
    <property type="resolution" value="1.80 A"/>
    <property type="chains" value="A/B=34-143"/>
</dbReference>
<dbReference type="PDBsum" id="1HZK"/>
<dbReference type="PDBsum" id="1HZL"/>
<dbReference type="PDBsum" id="1J48"/>
<dbReference type="BMRB" id="Q06110"/>
<dbReference type="SMR" id="Q06110"/>
<dbReference type="DrugBank" id="DB03933">
    <property type="generic name" value="C-1027 Aromatized chromophore"/>
</dbReference>
<dbReference type="EvolutionaryTrace" id="Q06110"/>
<dbReference type="GO" id="GO:0003677">
    <property type="term" value="F:DNA binding"/>
    <property type="evidence" value="ECO:0007669"/>
    <property type="project" value="UniProtKB-KW"/>
</dbReference>
<dbReference type="GO" id="GO:0042742">
    <property type="term" value="P:defense response to bacterium"/>
    <property type="evidence" value="ECO:0007669"/>
    <property type="project" value="UniProtKB-KW"/>
</dbReference>
<dbReference type="Gene3D" id="2.60.40.230">
    <property type="entry name" value="Neocarzinostatin-like"/>
    <property type="match status" value="1"/>
</dbReference>
<dbReference type="InterPro" id="IPR027273">
    <property type="entry name" value="Neocarzinostatin-like"/>
</dbReference>
<dbReference type="InterPro" id="IPR002186">
    <property type="entry name" value="Neocarzinostatin_fam"/>
</dbReference>
<dbReference type="NCBIfam" id="NF040680">
    <property type="entry name" value="chromo_anti"/>
    <property type="match status" value="1"/>
</dbReference>
<dbReference type="Pfam" id="PF00960">
    <property type="entry name" value="Neocarzinostat"/>
    <property type="match status" value="1"/>
</dbReference>
<dbReference type="PRINTS" id="PR01885">
    <property type="entry name" value="MACROMOMYCIN"/>
</dbReference>
<dbReference type="SUPFAM" id="SSF49319">
    <property type="entry name" value="Actinoxanthin-like"/>
    <property type="match status" value="1"/>
</dbReference>
<evidence type="ECO:0000269" key="1">
    <source>
    </source>
</evidence>
<evidence type="ECO:0000305" key="2"/>
<evidence type="ECO:0007829" key="3">
    <source>
        <dbReference type="PDB" id="1HZK"/>
    </source>
</evidence>
<evidence type="ECO:0007829" key="4">
    <source>
        <dbReference type="PDB" id="1HZL"/>
    </source>
</evidence>
<evidence type="ECO:0007829" key="5">
    <source>
        <dbReference type="PDB" id="1J48"/>
    </source>
</evidence>
<name>CAGA_STRGL</name>
<proteinExistence type="evidence at protein level"/>
<sequence length="143" mass="13873">MSLRHMSRRASRFGVVAVASIGLAAAAQSVAFAAPAFSVSPASGLSDGQSVSVSVSGAAAGETYYIAQCAPVGGQDACNPATATSFTTDASGAASFSFVVRKSYTGSTPEGTPVGSVDCATAACNLGAGNSGLDLGHVALTFG</sequence>
<protein>
    <recommendedName>
        <fullName>Antitumor antibiotic C-1027 apoprotein</fullName>
    </recommendedName>
    <alternativeName>
        <fullName>C-1027-AG</fullName>
    </alternativeName>
</protein>
<keyword id="KW-0002">3D-structure</keyword>
<keyword id="KW-0044">Antibiotic</keyword>
<keyword id="KW-0929">Antimicrobial</keyword>
<keyword id="KW-0903">Direct protein sequencing</keyword>
<keyword id="KW-1015">Disulfide bond</keyword>
<keyword id="KW-0238">DNA-binding</keyword>
<keyword id="KW-0732">Signal</keyword>
<reference key="1">
    <citation type="journal article" date="1992" name="Biosci. Biotechnol. Biochem.">
        <title>Cloning and nucleotide sequencing of the antitumor antibiotic C-1027 apoprotein gene.</title>
        <authorList>
            <person name="Sakata N."/>
            <person name="Ikeno S."/>
            <person name="Hori M."/>
            <person name="Hamada M."/>
            <person name="Otani T."/>
        </authorList>
    </citation>
    <scope>NUCLEOTIDE SEQUENCE [GENOMIC DNA]</scope>
    <source>
        <strain>C-1027</strain>
    </source>
</reference>
<reference key="2">
    <citation type="journal article" date="1991" name="Agric. Biol. Chem.">
        <title>Purification and primary structure of C-1027-AG, a selective antagonist of antitumor antibiotic C-1027, from Streptomyces globisporus.</title>
        <authorList>
            <person name="Otani T."/>
            <person name="Yasuhara T."/>
            <person name="Minami Y."/>
            <person name="Shimazu T."/>
            <person name="Zhang R."/>
            <person name="Xie M.Y."/>
        </authorList>
    </citation>
    <scope>PROTEIN SEQUENCE OF 34-143</scope>
</reference>
<reference key="3">
    <citation type="journal article" date="1993" name="Biochemistry">
        <title>Some characteristics of DNA strand scission by macromolecular antitumor antibiotic C-1027 containing a novel enediyne chromophore.</title>
        <authorList>
            <person name="Sugiura Y."/>
            <person name="Matsumoto T."/>
        </authorList>
    </citation>
    <scope>CHARACTERIZATION</scope>
</reference>
<organism>
    <name type="scientific">Streptomyces globisporus</name>
    <dbReference type="NCBI Taxonomy" id="1908"/>
    <lineage>
        <taxon>Bacteria</taxon>
        <taxon>Bacillati</taxon>
        <taxon>Actinomycetota</taxon>
        <taxon>Actinomycetes</taxon>
        <taxon>Kitasatosporales</taxon>
        <taxon>Streptomycetaceae</taxon>
        <taxon>Streptomyces</taxon>
    </lineage>
</organism>
<gene>
    <name type="primary">cagA</name>
</gene>
<feature type="signal peptide" evidence="1">
    <location>
        <begin position="1"/>
        <end position="33"/>
    </location>
</feature>
<feature type="chain" id="PRO_0000019459" description="Antitumor antibiotic C-1027 apoprotein">
    <location>
        <begin position="34"/>
        <end position="143"/>
    </location>
</feature>
<feature type="disulfide bond">
    <location>
        <begin position="69"/>
        <end position="78"/>
    </location>
</feature>
<feature type="disulfide bond">
    <location>
        <begin position="119"/>
        <end position="124"/>
    </location>
</feature>
<feature type="strand" evidence="5">
    <location>
        <begin position="36"/>
        <end position="40"/>
    </location>
</feature>
<feature type="strand" evidence="4">
    <location>
        <begin position="43"/>
        <end position="45"/>
    </location>
</feature>
<feature type="strand" evidence="5">
    <location>
        <begin position="50"/>
        <end position="58"/>
    </location>
</feature>
<feature type="strand" evidence="5">
    <location>
        <begin position="63"/>
        <end position="72"/>
    </location>
</feature>
<feature type="strand" evidence="5">
    <location>
        <begin position="75"/>
        <end position="78"/>
    </location>
</feature>
<feature type="turn" evidence="5">
    <location>
        <begin position="80"/>
        <end position="82"/>
    </location>
</feature>
<feature type="strand" evidence="5">
    <location>
        <begin position="84"/>
        <end position="87"/>
    </location>
</feature>
<feature type="strand" evidence="5">
    <location>
        <begin position="94"/>
        <end position="99"/>
    </location>
</feature>
<feature type="strand" evidence="5">
    <location>
        <begin position="102"/>
        <end position="107"/>
    </location>
</feature>
<feature type="strand" evidence="3">
    <location>
        <begin position="109"/>
        <end position="111"/>
    </location>
</feature>
<feature type="strand" evidence="5">
    <location>
        <begin position="113"/>
        <end position="118"/>
    </location>
</feature>
<feature type="turn" evidence="5">
    <location>
        <begin position="119"/>
        <end position="121"/>
    </location>
</feature>
<feature type="strand" evidence="5">
    <location>
        <begin position="125"/>
        <end position="130"/>
    </location>
</feature>
<feature type="strand" evidence="5">
    <location>
        <begin position="133"/>
        <end position="139"/>
    </location>
</feature>
<accession>Q06110</accession>
<comment type="function">
    <text>Binds non-covalently to a chromophore which is the cytotoxic and mutagenic component of the antibiotic. The chromophore binds to DNA as a weak intercalator and causes single- and double-strand breaks.</text>
</comment>
<comment type="similarity">
    <text evidence="2">Belongs to the neocarzinostatin family.</text>
</comment>